<proteinExistence type="evidence at protein level"/>
<accession>T2KNA3</accession>
<protein>
    <recommendedName>
        <fullName evidence="3">Endo-acting ulvan lyase</fullName>
        <ecNumber evidence="2">4.2.2.-</ecNumber>
    </recommendedName>
    <alternativeName>
        <fullName>Endolytic ulvan lyase</fullName>
    </alternativeName>
    <alternativeName>
        <fullName evidence="3">P10_PLnc</fullName>
    </alternativeName>
    <alternativeName>
        <fullName evidence="3">Polysaccharide utilization locus H protein P10</fullName>
        <shortName>PUL H protein P10</shortName>
    </alternativeName>
</protein>
<sequence>MGTSVRRISVVLMMLFGTNFCWSQSMQHPVIWVTQDEKQDILNLIEKYDWAKKMEHDLHAVVDKKVEAHQKKPSVILSHIPEIPADNSLTEFEAVTVGDHAAVLTDASYAAMLYFLTDDEKYAQFSADVLWHYVTVLSDRSPKNTTICGNHFYDPRTSYAQFALAYDFIYNFLNKPTTKVYKASANKQQTFDRDLFQKVLLNMVGSSLQEYGRPDTHGKFISNHPILTAPGVLYGILCIEDDKERERLFDVFWEKGTAHQNSFKNTILPMFGKQGIWPESTSYSFMPAVTLVLNIIDRVYPEMQVTQNYKNIYKGNFLFDNLRMPDGRFVRYGDSKRNHDGTEQLYRYTLNLAQRRGYSNLENQAKIALSQAYQRQGGYQSKISPATFNSSEPLKLFWGTPIPKGIDSKIDFKKPTVLVEHAGIALQRNYVETDNELYGLCGIIGGAHYVHSHVTGITMELYGAGYVMAPNGGLPKTVKERRIPLHENYFRLYAGNNTVIVNGTSHGIQPGSWKDGAYVWQNTVVNIAAEPKHLEDPISEHFNFATQFLKDTINNCDQERTLSTIRTSEKTGYYLDVFRSKSLTENKFQDYIYHNIGDATLLETENGETLRTEPTTRYKTDIGDPVQSPGWRYFEDTKSTKPIHKGVHATFKIDYDERFMHMFVPQGVNRSYTTALAPPTREAKNGYEEKPTQVLAIRQDGEAWEKPFIAVFEPSVKASSSVQTVTPLQDADKVVGVTVISKVNGKLITDYIISLDSKDGVYENKILKIKFEGRFGIIRVEGEQKTISLYIGEGKTLKYNNYTLDSETATTAYKVF</sequence>
<dbReference type="EC" id="4.2.2.-" evidence="2"/>
<dbReference type="EMBL" id="HG315671">
    <property type="protein sequence ID" value="CDF79911.1"/>
    <property type="molecule type" value="Genomic_DNA"/>
</dbReference>
<dbReference type="RefSeq" id="WP_038530499.1">
    <property type="nucleotide sequence ID" value="NZ_HG315671.1"/>
</dbReference>
<dbReference type="SMR" id="T2KNA3"/>
<dbReference type="STRING" id="1347342.BN863_21990"/>
<dbReference type="PATRIC" id="fig|1347342.6.peg.2206"/>
<dbReference type="eggNOG" id="ENOG502Z862">
    <property type="taxonomic scope" value="Bacteria"/>
</dbReference>
<dbReference type="HOGENOM" id="CLU_014479_0_0_10"/>
<dbReference type="OrthoDB" id="8732671at2"/>
<dbReference type="Proteomes" id="UP000016160">
    <property type="component" value="Chromosome"/>
</dbReference>
<dbReference type="GO" id="GO:0009986">
    <property type="term" value="C:cell surface"/>
    <property type="evidence" value="ECO:0007669"/>
    <property type="project" value="UniProtKB-SubCell"/>
</dbReference>
<dbReference type="GO" id="GO:0042597">
    <property type="term" value="C:periplasmic space"/>
    <property type="evidence" value="ECO:0007669"/>
    <property type="project" value="UniProtKB-SubCell"/>
</dbReference>
<dbReference type="GO" id="GO:0016829">
    <property type="term" value="F:lyase activity"/>
    <property type="evidence" value="ECO:0007669"/>
    <property type="project" value="UniProtKB-KW"/>
</dbReference>
<dbReference type="Gene3D" id="2.70.98.70">
    <property type="match status" value="1"/>
</dbReference>
<dbReference type="Gene3D" id="1.50.10.100">
    <property type="entry name" value="Chondroitin AC/alginate lyase"/>
    <property type="match status" value="1"/>
</dbReference>
<dbReference type="InterPro" id="IPR008929">
    <property type="entry name" value="Chondroitin_lyas"/>
</dbReference>
<dbReference type="SUPFAM" id="SSF48230">
    <property type="entry name" value="Chondroitin AC/alginate lyase"/>
    <property type="match status" value="1"/>
</dbReference>
<organism>
    <name type="scientific">Formosa agariphila (strain DSM 15362 / KCTC 12365 / LMG 23005 / KMM 3901 / M-2Alg 35-1)</name>
    <dbReference type="NCBI Taxonomy" id="1347342"/>
    <lineage>
        <taxon>Bacteria</taxon>
        <taxon>Pseudomonadati</taxon>
        <taxon>Bacteroidota</taxon>
        <taxon>Flavobacteriia</taxon>
        <taxon>Flavobacteriales</taxon>
        <taxon>Flavobacteriaceae</taxon>
        <taxon>Formosa</taxon>
    </lineage>
</organism>
<keyword id="KW-0456">Lyase</keyword>
<keyword id="KW-0574">Periplasm</keyword>
<keyword id="KW-1185">Reference proteome</keyword>
<keyword id="KW-0732">Signal</keyword>
<name>PLH10_FORAG</name>
<gene>
    <name type="ORF">BN863_21990</name>
</gene>
<reference key="1">
    <citation type="journal article" date="2013" name="Appl. Environ. Microbiol.">
        <title>The genome of the alga-associated marine flavobacterium Formosa agariphila KMM 3901T reveals a broad potential for degradation of algal polysaccharides.</title>
        <authorList>
            <person name="Mann A.J."/>
            <person name="Hahnke R.L."/>
            <person name="Huang S."/>
            <person name="Werner J."/>
            <person name="Xing P."/>
            <person name="Barbeyron T."/>
            <person name="Huettel B."/>
            <person name="Stueber K."/>
            <person name="Reinhardt R."/>
            <person name="Harder J."/>
            <person name="Gloeckner F.O."/>
            <person name="Amann R.I."/>
            <person name="Teeling H."/>
        </authorList>
    </citation>
    <scope>NUCLEOTIDE SEQUENCE [LARGE SCALE GENOMIC DNA]</scope>
    <source>
        <strain>DSM 15362 / KCTC 12365 / LMG 23005 / KMM 3901 / M-2Alg 35-1</strain>
    </source>
</reference>
<reference key="2">
    <citation type="journal article" date="2019" name="Nat. Chem. Biol.">
        <title>A marine bacterial enzymatic cascade degrades the algal polysaccharide ulvan.</title>
        <authorList>
            <person name="Reisky L."/>
            <person name="Prechoux A."/>
            <person name="Zuehlke M.K."/>
            <person name="Baeumgen M."/>
            <person name="Robb C.S."/>
            <person name="Gerlach N."/>
            <person name="Roret T."/>
            <person name="Stanetty C."/>
            <person name="Larocque R."/>
            <person name="Michel G."/>
            <person name="Song T."/>
            <person name="Markert S."/>
            <person name="Unfried F."/>
            <person name="Mihovilovic M.D."/>
            <person name="Trautwein-Schult A."/>
            <person name="Becher D."/>
            <person name="Schweder T."/>
            <person name="Bornscheuer U.T."/>
            <person name="Hehemann J.H."/>
        </authorList>
    </citation>
    <scope>FUNCTION</scope>
    <scope>CATALYTIC ACTIVITY</scope>
    <scope>INDUCTION</scope>
    <scope>SUBCELLULAR LOCATION</scope>
</reference>
<comment type="function">
    <text evidence="2 5">Ulvan lyase involved in ulvan degradation (PubMed:31285597). Ulvan is the main polysaccharide component of the Ulvales (green seaweed) cell wall. It is composed of disaccharide building blocks comprising 3-sulfated rhamnose (Rha3S) linked to D-glucuronic acid (GlcA), L-iduronic acid (IduA), or D-xylose (Xyl) (Probable). Ulvan lyase catalyzes the endolytic cleavage of the glycosidic bond between Rha3S and the uronic acids GlcA or IduA, producing oligosaccharides that have unsaturated 4-deoxy-L-threo-hex-4-enopyranosiduronic acid (deltaUA) at the non-reducing end. This results eventually in the degradation of the ulvan polysaccharide into deltaUA-Rha3S disaccharides and deltaUA-Rha3S-Xyl-Rha3S tetrasaccharides (PubMed:31285597).</text>
</comment>
<comment type="subcellular location">
    <subcellularLocation>
        <location evidence="2">Cell surface</location>
    </subcellularLocation>
    <subcellularLocation>
        <location evidence="2">Periplasm</location>
    </subcellularLocation>
</comment>
<comment type="induction">
    <text evidence="2">By ulvan and rhamnose.</text>
</comment>
<comment type="similarity">
    <text evidence="4">Belongs to the polysaccharide lyase family.</text>
</comment>
<evidence type="ECO:0000255" key="1"/>
<evidence type="ECO:0000269" key="2">
    <source>
    </source>
</evidence>
<evidence type="ECO:0000303" key="3">
    <source>
    </source>
</evidence>
<evidence type="ECO:0000305" key="4"/>
<evidence type="ECO:0000305" key="5">
    <source>
    </source>
</evidence>
<feature type="signal peptide" evidence="1">
    <location>
        <begin position="1"/>
        <end position="23"/>
    </location>
</feature>
<feature type="chain" id="PRO_5004590961" description="Endo-acting ulvan lyase">
    <location>
        <begin position="24"/>
        <end position="816"/>
    </location>
</feature>